<reference key="1">
    <citation type="journal article" date="2007" name="PLoS ONE">
        <title>Paradoxical DNA repair and peroxide resistance gene conservation in Bacillus pumilus SAFR-032.</title>
        <authorList>
            <person name="Gioia J."/>
            <person name="Yerrapragada S."/>
            <person name="Qin X."/>
            <person name="Jiang H."/>
            <person name="Igboeli O.C."/>
            <person name="Muzny D."/>
            <person name="Dugan-Rocha S."/>
            <person name="Ding Y."/>
            <person name="Hawes A."/>
            <person name="Liu W."/>
            <person name="Perez L."/>
            <person name="Kovar C."/>
            <person name="Dinh H."/>
            <person name="Lee S."/>
            <person name="Nazareth L."/>
            <person name="Blyth P."/>
            <person name="Holder M."/>
            <person name="Buhay C."/>
            <person name="Tirumalai M.R."/>
            <person name="Liu Y."/>
            <person name="Dasgupta I."/>
            <person name="Bokhetache L."/>
            <person name="Fujita M."/>
            <person name="Karouia F."/>
            <person name="Eswara Moorthy P."/>
            <person name="Siefert J."/>
            <person name="Uzman A."/>
            <person name="Buzumbo P."/>
            <person name="Verma A."/>
            <person name="Zwiya H."/>
            <person name="McWilliams B.D."/>
            <person name="Olowu A."/>
            <person name="Clinkenbeard K.D."/>
            <person name="Newcombe D."/>
            <person name="Golebiewski L."/>
            <person name="Petrosino J.F."/>
            <person name="Nicholson W.L."/>
            <person name="Fox G.E."/>
            <person name="Venkateswaran K."/>
            <person name="Highlander S.K."/>
            <person name="Weinstock G.M."/>
        </authorList>
    </citation>
    <scope>NUCLEOTIDE SEQUENCE [LARGE SCALE GENOMIC DNA]</scope>
    <source>
        <strain>SAFR-032</strain>
    </source>
</reference>
<feature type="chain" id="PRO_0000323620" description="DNA-directed RNA polymerase subunit alpha">
    <location>
        <begin position="1"/>
        <end position="314"/>
    </location>
</feature>
<feature type="region of interest" description="Alpha N-terminal domain (alpha-NTD)" evidence="1">
    <location>
        <begin position="1"/>
        <end position="228"/>
    </location>
</feature>
<feature type="region of interest" description="Alpha C-terminal domain (alpha-CTD)" evidence="1">
    <location>
        <begin position="246"/>
        <end position="314"/>
    </location>
</feature>
<keyword id="KW-0240">DNA-directed RNA polymerase</keyword>
<keyword id="KW-0548">Nucleotidyltransferase</keyword>
<keyword id="KW-0804">Transcription</keyword>
<keyword id="KW-0808">Transferase</keyword>
<name>RPOA_BACP2</name>
<organism>
    <name type="scientific">Bacillus pumilus (strain SAFR-032)</name>
    <dbReference type="NCBI Taxonomy" id="315750"/>
    <lineage>
        <taxon>Bacteria</taxon>
        <taxon>Bacillati</taxon>
        <taxon>Bacillota</taxon>
        <taxon>Bacilli</taxon>
        <taxon>Bacillales</taxon>
        <taxon>Bacillaceae</taxon>
        <taxon>Bacillus</taxon>
    </lineage>
</organism>
<evidence type="ECO:0000255" key="1">
    <source>
        <dbReference type="HAMAP-Rule" id="MF_00059"/>
    </source>
</evidence>
<protein>
    <recommendedName>
        <fullName evidence="1">DNA-directed RNA polymerase subunit alpha</fullName>
        <shortName evidence="1">RNAP subunit alpha</shortName>
        <ecNumber evidence="1">2.7.7.6</ecNumber>
    </recommendedName>
    <alternativeName>
        <fullName evidence="1">RNA polymerase subunit alpha</fullName>
    </alternativeName>
    <alternativeName>
        <fullName evidence="1">Transcriptase subunit alpha</fullName>
    </alternativeName>
</protein>
<accession>A8F9B2</accession>
<proteinExistence type="inferred from homology"/>
<sequence>MIEIEKPKIETVEISDDAKYGKFVVEPLERGYGTTLGNSLRRILLSSLPGAAVTSIQIDGVLHEFSTIEGVVEDVTTIILNIKKLALKIYSEEEKTLEIDVQDEGTVTAADITHDSDIEILNPDLHIATLGKNASFRVRLTAQRGRGYNPADANKRDDQPIGVIPIDSIYTPVSRVTYQVENTRVGQITNYDKLTLDVWTDGSTGPKEAIALGSKILTEHLNIFVGLTDEAQHAEIMVEKEEDQKEKVLEMTIEELDLSVRSYNCLKRAGINTVQELANKTEEDMMKVRNLGRKSLEEVKAKLEELGLGLRKDD</sequence>
<comment type="function">
    <text evidence="1">DNA-dependent RNA polymerase catalyzes the transcription of DNA into RNA using the four ribonucleoside triphosphates as substrates.</text>
</comment>
<comment type="catalytic activity">
    <reaction evidence="1">
        <text>RNA(n) + a ribonucleoside 5'-triphosphate = RNA(n+1) + diphosphate</text>
        <dbReference type="Rhea" id="RHEA:21248"/>
        <dbReference type="Rhea" id="RHEA-COMP:14527"/>
        <dbReference type="Rhea" id="RHEA-COMP:17342"/>
        <dbReference type="ChEBI" id="CHEBI:33019"/>
        <dbReference type="ChEBI" id="CHEBI:61557"/>
        <dbReference type="ChEBI" id="CHEBI:140395"/>
        <dbReference type="EC" id="2.7.7.6"/>
    </reaction>
</comment>
<comment type="subunit">
    <text evidence="1">Homodimer. The RNAP catalytic core consists of 2 alpha, 1 beta, 1 beta' and 1 omega subunit. When a sigma factor is associated with the core the holoenzyme is formed, which can initiate transcription.</text>
</comment>
<comment type="domain">
    <text evidence="1">The N-terminal domain is essential for RNAP assembly and basal transcription, whereas the C-terminal domain is involved in interaction with transcriptional regulators and with upstream promoter elements.</text>
</comment>
<comment type="similarity">
    <text evidence="1">Belongs to the RNA polymerase alpha chain family.</text>
</comment>
<dbReference type="EC" id="2.7.7.6" evidence="1"/>
<dbReference type="EMBL" id="CP000813">
    <property type="protein sequence ID" value="ABV60829.1"/>
    <property type="molecule type" value="Genomic_DNA"/>
</dbReference>
<dbReference type="RefSeq" id="WP_003217009.1">
    <property type="nucleotide sequence ID" value="NZ_VEIS01000020.1"/>
</dbReference>
<dbReference type="SMR" id="A8F9B2"/>
<dbReference type="STRING" id="315750.BPUM_0130"/>
<dbReference type="KEGG" id="bpu:BPUM_0130"/>
<dbReference type="eggNOG" id="COG0202">
    <property type="taxonomic scope" value="Bacteria"/>
</dbReference>
<dbReference type="HOGENOM" id="CLU_053084_0_1_9"/>
<dbReference type="OrthoDB" id="9805706at2"/>
<dbReference type="Proteomes" id="UP000001355">
    <property type="component" value="Chromosome"/>
</dbReference>
<dbReference type="GO" id="GO:0005737">
    <property type="term" value="C:cytoplasm"/>
    <property type="evidence" value="ECO:0007669"/>
    <property type="project" value="UniProtKB-ARBA"/>
</dbReference>
<dbReference type="GO" id="GO:0000428">
    <property type="term" value="C:DNA-directed RNA polymerase complex"/>
    <property type="evidence" value="ECO:0007669"/>
    <property type="project" value="UniProtKB-KW"/>
</dbReference>
<dbReference type="GO" id="GO:0003677">
    <property type="term" value="F:DNA binding"/>
    <property type="evidence" value="ECO:0007669"/>
    <property type="project" value="UniProtKB-UniRule"/>
</dbReference>
<dbReference type="GO" id="GO:0003899">
    <property type="term" value="F:DNA-directed RNA polymerase activity"/>
    <property type="evidence" value="ECO:0007669"/>
    <property type="project" value="UniProtKB-UniRule"/>
</dbReference>
<dbReference type="GO" id="GO:0046983">
    <property type="term" value="F:protein dimerization activity"/>
    <property type="evidence" value="ECO:0007669"/>
    <property type="project" value="InterPro"/>
</dbReference>
<dbReference type="GO" id="GO:0006351">
    <property type="term" value="P:DNA-templated transcription"/>
    <property type="evidence" value="ECO:0007669"/>
    <property type="project" value="UniProtKB-UniRule"/>
</dbReference>
<dbReference type="CDD" id="cd06928">
    <property type="entry name" value="RNAP_alpha_NTD"/>
    <property type="match status" value="1"/>
</dbReference>
<dbReference type="FunFam" id="1.10.150.20:FF:000001">
    <property type="entry name" value="DNA-directed RNA polymerase subunit alpha"/>
    <property type="match status" value="1"/>
</dbReference>
<dbReference type="FunFam" id="2.170.120.12:FF:000001">
    <property type="entry name" value="DNA-directed RNA polymerase subunit alpha"/>
    <property type="match status" value="1"/>
</dbReference>
<dbReference type="Gene3D" id="1.10.150.20">
    <property type="entry name" value="5' to 3' exonuclease, C-terminal subdomain"/>
    <property type="match status" value="1"/>
</dbReference>
<dbReference type="Gene3D" id="2.170.120.12">
    <property type="entry name" value="DNA-directed RNA polymerase, insert domain"/>
    <property type="match status" value="1"/>
</dbReference>
<dbReference type="Gene3D" id="3.30.1360.10">
    <property type="entry name" value="RNA polymerase, RBP11-like subunit"/>
    <property type="match status" value="1"/>
</dbReference>
<dbReference type="HAMAP" id="MF_00059">
    <property type="entry name" value="RNApol_bact_RpoA"/>
    <property type="match status" value="1"/>
</dbReference>
<dbReference type="InterPro" id="IPR011262">
    <property type="entry name" value="DNA-dir_RNA_pol_insert"/>
</dbReference>
<dbReference type="InterPro" id="IPR011263">
    <property type="entry name" value="DNA-dir_RNA_pol_RpoA/D/Rpb3"/>
</dbReference>
<dbReference type="InterPro" id="IPR011773">
    <property type="entry name" value="DNA-dir_RpoA"/>
</dbReference>
<dbReference type="InterPro" id="IPR036603">
    <property type="entry name" value="RBP11-like"/>
</dbReference>
<dbReference type="InterPro" id="IPR011260">
    <property type="entry name" value="RNAP_asu_C"/>
</dbReference>
<dbReference type="InterPro" id="IPR036643">
    <property type="entry name" value="RNApol_insert_sf"/>
</dbReference>
<dbReference type="NCBIfam" id="NF003513">
    <property type="entry name" value="PRK05182.1-2"/>
    <property type="match status" value="1"/>
</dbReference>
<dbReference type="NCBIfam" id="NF003515">
    <property type="entry name" value="PRK05182.2-1"/>
    <property type="match status" value="1"/>
</dbReference>
<dbReference type="NCBIfam" id="NF003516">
    <property type="entry name" value="PRK05182.2-2"/>
    <property type="match status" value="1"/>
</dbReference>
<dbReference type="NCBIfam" id="NF003519">
    <property type="entry name" value="PRK05182.2-5"/>
    <property type="match status" value="1"/>
</dbReference>
<dbReference type="NCBIfam" id="TIGR02027">
    <property type="entry name" value="rpoA"/>
    <property type="match status" value="1"/>
</dbReference>
<dbReference type="Pfam" id="PF01000">
    <property type="entry name" value="RNA_pol_A_bac"/>
    <property type="match status" value="1"/>
</dbReference>
<dbReference type="Pfam" id="PF03118">
    <property type="entry name" value="RNA_pol_A_CTD"/>
    <property type="match status" value="1"/>
</dbReference>
<dbReference type="Pfam" id="PF01193">
    <property type="entry name" value="RNA_pol_L"/>
    <property type="match status" value="1"/>
</dbReference>
<dbReference type="SMART" id="SM00662">
    <property type="entry name" value="RPOLD"/>
    <property type="match status" value="1"/>
</dbReference>
<dbReference type="SUPFAM" id="SSF47789">
    <property type="entry name" value="C-terminal domain of RNA polymerase alpha subunit"/>
    <property type="match status" value="1"/>
</dbReference>
<dbReference type="SUPFAM" id="SSF56553">
    <property type="entry name" value="Insert subdomain of RNA polymerase alpha subunit"/>
    <property type="match status" value="1"/>
</dbReference>
<dbReference type="SUPFAM" id="SSF55257">
    <property type="entry name" value="RBP11-like subunits of RNA polymerase"/>
    <property type="match status" value="1"/>
</dbReference>
<gene>
    <name evidence="1" type="primary">rpoA</name>
    <name type="ordered locus">BPUM_0130</name>
</gene>